<sequence length="193" mass="21610">MYKKIIFSEFNSASKILKNFLEDKKQIENIQKAAILIAQSFKNEKKVISCGNGGSHCDAVHFSEELTSVYRKKRSGYPAISISDSSYISAVGNDFGYDQIFSRFIQSVGHLGDILLAISTSGNSLNIVRAIEEAKKKKMKVIVLTGNNAGKIKNLSDIEICIPHCGYSDRIQEMHIKIIHILILIIEKEMQKN</sequence>
<proteinExistence type="inferred from homology"/>
<organism>
    <name type="scientific">Buchnera aphidicola subsp. Acyrthosiphon pisum (strain Tuc7)</name>
    <dbReference type="NCBI Taxonomy" id="561501"/>
    <lineage>
        <taxon>Bacteria</taxon>
        <taxon>Pseudomonadati</taxon>
        <taxon>Pseudomonadota</taxon>
        <taxon>Gammaproteobacteria</taxon>
        <taxon>Enterobacterales</taxon>
        <taxon>Erwiniaceae</taxon>
        <taxon>Buchnera</taxon>
    </lineage>
</organism>
<comment type="function">
    <text evidence="1">Catalyzes the isomerization of sedoheptulose 7-phosphate in D-glycero-D-manno-heptose 7-phosphate.</text>
</comment>
<comment type="catalytic activity">
    <reaction evidence="1">
        <text>2 D-sedoheptulose 7-phosphate = D-glycero-alpha-D-manno-heptose 7-phosphate + D-glycero-beta-D-manno-heptose 7-phosphate</text>
        <dbReference type="Rhea" id="RHEA:27489"/>
        <dbReference type="ChEBI" id="CHEBI:57483"/>
        <dbReference type="ChEBI" id="CHEBI:60203"/>
        <dbReference type="ChEBI" id="CHEBI:60204"/>
        <dbReference type="EC" id="5.3.1.28"/>
    </reaction>
</comment>
<comment type="cofactor">
    <cofactor evidence="1">
        <name>Zn(2+)</name>
        <dbReference type="ChEBI" id="CHEBI:29105"/>
    </cofactor>
    <text evidence="1">Binds 1 zinc ion per subunit.</text>
</comment>
<comment type="pathway">
    <text evidence="1">Carbohydrate biosynthesis; D-glycero-D-manno-heptose 7-phosphate biosynthesis; D-glycero-alpha-D-manno-heptose 7-phosphate and D-glycero-beta-D-manno-heptose 7-phosphate from sedoheptulose 7-phosphate: step 1/1.</text>
</comment>
<comment type="subunit">
    <text evidence="1">Homotetramer.</text>
</comment>
<comment type="subcellular location">
    <subcellularLocation>
        <location evidence="1">Cytoplasm</location>
    </subcellularLocation>
</comment>
<comment type="miscellaneous">
    <text evidence="1">The reaction produces a racemic mixture of D-glycero-alpha-D-manno-heptose 7-phosphate and D-glycero-beta-D-manno-heptose 7-phosphate.</text>
</comment>
<comment type="similarity">
    <text evidence="1">Belongs to the SIS family. GmhA subfamily.</text>
</comment>
<gene>
    <name evidence="1" type="primary">gmhA</name>
    <name type="ordered locus">BUAPTUC7_247</name>
</gene>
<dbReference type="EC" id="5.3.1.28" evidence="1"/>
<dbReference type="EMBL" id="CP001158">
    <property type="protein sequence ID" value="ACL30062.1"/>
    <property type="molecule type" value="Genomic_DNA"/>
</dbReference>
<dbReference type="SMR" id="B8D7E7"/>
<dbReference type="KEGG" id="bau:BUAPTUC7_247"/>
<dbReference type="HOGENOM" id="CLU_080999_4_0_6"/>
<dbReference type="UniPathway" id="UPA00041">
    <property type="reaction ID" value="UER00436"/>
</dbReference>
<dbReference type="GO" id="GO:0005737">
    <property type="term" value="C:cytoplasm"/>
    <property type="evidence" value="ECO:0007669"/>
    <property type="project" value="UniProtKB-SubCell"/>
</dbReference>
<dbReference type="GO" id="GO:0097367">
    <property type="term" value="F:carbohydrate derivative binding"/>
    <property type="evidence" value="ECO:0007669"/>
    <property type="project" value="InterPro"/>
</dbReference>
<dbReference type="GO" id="GO:0008968">
    <property type="term" value="F:D-sedoheptulose 7-phosphate isomerase activity"/>
    <property type="evidence" value="ECO:0007669"/>
    <property type="project" value="UniProtKB-UniRule"/>
</dbReference>
<dbReference type="GO" id="GO:0008270">
    <property type="term" value="F:zinc ion binding"/>
    <property type="evidence" value="ECO:0007669"/>
    <property type="project" value="UniProtKB-UniRule"/>
</dbReference>
<dbReference type="GO" id="GO:0005975">
    <property type="term" value="P:carbohydrate metabolic process"/>
    <property type="evidence" value="ECO:0007669"/>
    <property type="project" value="UniProtKB-UniRule"/>
</dbReference>
<dbReference type="GO" id="GO:2001061">
    <property type="term" value="P:D-glycero-D-manno-heptose 7-phosphate biosynthetic process"/>
    <property type="evidence" value="ECO:0007669"/>
    <property type="project" value="UniProtKB-UniPathway"/>
</dbReference>
<dbReference type="CDD" id="cd05006">
    <property type="entry name" value="SIS_GmhA"/>
    <property type="match status" value="1"/>
</dbReference>
<dbReference type="Gene3D" id="3.40.50.10490">
    <property type="entry name" value="Glucose-6-phosphate isomerase like protein, domain 1"/>
    <property type="match status" value="1"/>
</dbReference>
<dbReference type="HAMAP" id="MF_00067">
    <property type="entry name" value="GmhA"/>
    <property type="match status" value="1"/>
</dbReference>
<dbReference type="InterPro" id="IPR035461">
    <property type="entry name" value="GmhA/DiaA"/>
</dbReference>
<dbReference type="InterPro" id="IPR004515">
    <property type="entry name" value="Phosphoheptose_Isoase"/>
</dbReference>
<dbReference type="InterPro" id="IPR001347">
    <property type="entry name" value="SIS_dom"/>
</dbReference>
<dbReference type="InterPro" id="IPR046348">
    <property type="entry name" value="SIS_dom_sf"/>
</dbReference>
<dbReference type="InterPro" id="IPR050099">
    <property type="entry name" value="SIS_GmhA/DiaA_subfam"/>
</dbReference>
<dbReference type="NCBIfam" id="TIGR00441">
    <property type="entry name" value="gmhA"/>
    <property type="match status" value="1"/>
</dbReference>
<dbReference type="NCBIfam" id="NF001628">
    <property type="entry name" value="PRK00414.1"/>
    <property type="match status" value="1"/>
</dbReference>
<dbReference type="PANTHER" id="PTHR30390:SF7">
    <property type="entry name" value="PHOSPHOHEPTOSE ISOMERASE"/>
    <property type="match status" value="1"/>
</dbReference>
<dbReference type="PANTHER" id="PTHR30390">
    <property type="entry name" value="SEDOHEPTULOSE 7-PHOSPHATE ISOMERASE / DNAA INITIATOR-ASSOCIATING FACTOR FOR REPLICATION INITIATION"/>
    <property type="match status" value="1"/>
</dbReference>
<dbReference type="Pfam" id="PF13580">
    <property type="entry name" value="SIS_2"/>
    <property type="match status" value="1"/>
</dbReference>
<dbReference type="SUPFAM" id="SSF53697">
    <property type="entry name" value="SIS domain"/>
    <property type="match status" value="1"/>
</dbReference>
<dbReference type="PROSITE" id="PS51464">
    <property type="entry name" value="SIS"/>
    <property type="match status" value="1"/>
</dbReference>
<reference key="1">
    <citation type="journal article" date="2009" name="Science">
        <title>The dynamics and time scale of ongoing genomic erosion in symbiotic bacteria.</title>
        <authorList>
            <person name="Moran N.A."/>
            <person name="McLaughlin H.J."/>
            <person name="Sorek R."/>
        </authorList>
    </citation>
    <scope>NUCLEOTIDE SEQUENCE [LARGE SCALE GENOMIC DNA]</scope>
    <source>
        <strain>Tuc7</strain>
    </source>
</reference>
<feature type="chain" id="PRO_1000196991" description="Phosphoheptose isomerase">
    <location>
        <begin position="1"/>
        <end position="193"/>
    </location>
</feature>
<feature type="domain" description="SIS" evidence="1">
    <location>
        <begin position="37"/>
        <end position="193"/>
    </location>
</feature>
<feature type="binding site" evidence="1">
    <location>
        <begin position="52"/>
        <end position="54"/>
    </location>
    <ligand>
        <name>substrate</name>
    </ligand>
</feature>
<feature type="binding site" evidence="1">
    <location>
        <position position="61"/>
    </location>
    <ligand>
        <name>Zn(2+)</name>
        <dbReference type="ChEBI" id="CHEBI:29105"/>
    </ligand>
</feature>
<feature type="binding site" evidence="1">
    <location>
        <position position="65"/>
    </location>
    <ligand>
        <name>substrate</name>
    </ligand>
</feature>
<feature type="binding site" evidence="1">
    <location>
        <position position="65"/>
    </location>
    <ligand>
        <name>Zn(2+)</name>
        <dbReference type="ChEBI" id="CHEBI:29105"/>
    </ligand>
</feature>
<feature type="binding site" evidence="1">
    <location>
        <begin position="93"/>
        <end position="94"/>
    </location>
    <ligand>
        <name>substrate</name>
    </ligand>
</feature>
<feature type="binding site" evidence="1">
    <location>
        <begin position="119"/>
        <end position="121"/>
    </location>
    <ligand>
        <name>substrate</name>
    </ligand>
</feature>
<feature type="binding site" evidence="1">
    <location>
        <position position="124"/>
    </location>
    <ligand>
        <name>substrate</name>
    </ligand>
</feature>
<feature type="binding site" evidence="1">
    <location>
        <position position="172"/>
    </location>
    <ligand>
        <name>substrate</name>
    </ligand>
</feature>
<feature type="binding site" evidence="1">
    <location>
        <position position="172"/>
    </location>
    <ligand>
        <name>Zn(2+)</name>
        <dbReference type="ChEBI" id="CHEBI:29105"/>
    </ligand>
</feature>
<feature type="binding site" evidence="1">
    <location>
        <position position="180"/>
    </location>
    <ligand>
        <name>Zn(2+)</name>
        <dbReference type="ChEBI" id="CHEBI:29105"/>
    </ligand>
</feature>
<evidence type="ECO:0000255" key="1">
    <source>
        <dbReference type="HAMAP-Rule" id="MF_00067"/>
    </source>
</evidence>
<protein>
    <recommendedName>
        <fullName evidence="1">Phosphoheptose isomerase</fullName>
        <ecNumber evidence="1">5.3.1.28</ecNumber>
    </recommendedName>
    <alternativeName>
        <fullName evidence="1">Sedoheptulose 7-phosphate isomerase</fullName>
    </alternativeName>
</protein>
<name>GMHA_BUCAT</name>
<keyword id="KW-0119">Carbohydrate metabolism</keyword>
<keyword id="KW-0963">Cytoplasm</keyword>
<keyword id="KW-0413">Isomerase</keyword>
<keyword id="KW-0479">Metal-binding</keyword>
<keyword id="KW-0862">Zinc</keyword>
<accession>B8D7E7</accession>